<sequence length="404" mass="44652">MFKINENYLKLQGSYLFSTIGKKVRTYKEENPDKNVISLGIGDVTLPLAPSIISALHKATDEMAAKETFKGYSPDLGYEFLRSAIAKHDYEARGVQIALDEIFISDGAKSDSGNIGDIFAENNKIAVCDPVYPVYVDTNVMAGRTGEFNYTTGKWSNVIYMPCTKENKFVPSLPAETPDIIYLCFPNNPTGSAITKMKLQKWVDYAIEKGAVIIYDAAYEAYISEENCPHTIYECDGAKKCAIELRSFSKNAGFTGTRLGFTIVPKELTSDGVSLNSLWARRHGTKFNGAPYIIQTAGAAVYSPEGIAETREQINYYMNNARVIRDGLLEAGYQVSGGVNAPYIWLHTPDGMTSWEYFDYLLQNASVVGTPGSGFGPSGEGYFRLTAFGTYENTLEALRRIKNL</sequence>
<dbReference type="EC" id="2.6.1.83" evidence="1"/>
<dbReference type="EMBL" id="CP000885">
    <property type="protein sequence ID" value="ABX41018.1"/>
    <property type="molecule type" value="Genomic_DNA"/>
</dbReference>
<dbReference type="RefSeq" id="WP_012198662.1">
    <property type="nucleotide sequence ID" value="NC_010001.1"/>
</dbReference>
<dbReference type="SMR" id="A9KJ19"/>
<dbReference type="STRING" id="357809.Cphy_0631"/>
<dbReference type="KEGG" id="cpy:Cphy_0631"/>
<dbReference type="eggNOG" id="COG0436">
    <property type="taxonomic scope" value="Bacteria"/>
</dbReference>
<dbReference type="HOGENOM" id="CLU_051433_0_0_9"/>
<dbReference type="OrthoDB" id="9813612at2"/>
<dbReference type="UniPathway" id="UPA00034">
    <property type="reaction ID" value="UER00466"/>
</dbReference>
<dbReference type="Proteomes" id="UP000000370">
    <property type="component" value="Chromosome"/>
</dbReference>
<dbReference type="GO" id="GO:0010285">
    <property type="term" value="F:L,L-diaminopimelate aminotransferase activity"/>
    <property type="evidence" value="ECO:0007669"/>
    <property type="project" value="UniProtKB-UniRule"/>
</dbReference>
<dbReference type="GO" id="GO:0030170">
    <property type="term" value="F:pyridoxal phosphate binding"/>
    <property type="evidence" value="ECO:0007669"/>
    <property type="project" value="UniProtKB-UniRule"/>
</dbReference>
<dbReference type="GO" id="GO:0033362">
    <property type="term" value="P:lysine biosynthetic process via diaminopimelate, diaminopimelate-aminotransferase pathway"/>
    <property type="evidence" value="ECO:0007669"/>
    <property type="project" value="UniProtKB-UniRule"/>
</dbReference>
<dbReference type="CDD" id="cd00609">
    <property type="entry name" value="AAT_like"/>
    <property type="match status" value="1"/>
</dbReference>
<dbReference type="FunFam" id="3.40.640.10:FF:000099">
    <property type="entry name" value="LL-diaminopimelate aminotransferase, chloroplastic"/>
    <property type="match status" value="1"/>
</dbReference>
<dbReference type="Gene3D" id="3.90.1150.10">
    <property type="entry name" value="Aspartate Aminotransferase, domain 1"/>
    <property type="match status" value="1"/>
</dbReference>
<dbReference type="Gene3D" id="3.40.640.10">
    <property type="entry name" value="Type I PLP-dependent aspartate aminotransferase-like (Major domain)"/>
    <property type="match status" value="1"/>
</dbReference>
<dbReference type="HAMAP" id="MF_01642">
    <property type="entry name" value="DapL_aminotrans_1"/>
    <property type="match status" value="1"/>
</dbReference>
<dbReference type="InterPro" id="IPR004839">
    <property type="entry name" value="Aminotransferase_I/II_large"/>
</dbReference>
<dbReference type="InterPro" id="IPR019942">
    <property type="entry name" value="DapL/ALD1"/>
</dbReference>
<dbReference type="InterPro" id="IPR004838">
    <property type="entry name" value="NHTrfase_class1_PyrdxlP-BS"/>
</dbReference>
<dbReference type="InterPro" id="IPR015424">
    <property type="entry name" value="PyrdxlP-dep_Trfase"/>
</dbReference>
<dbReference type="InterPro" id="IPR015421">
    <property type="entry name" value="PyrdxlP-dep_Trfase_major"/>
</dbReference>
<dbReference type="InterPro" id="IPR015422">
    <property type="entry name" value="PyrdxlP-dep_Trfase_small"/>
</dbReference>
<dbReference type="NCBIfam" id="TIGR03542">
    <property type="entry name" value="DAPAT_plant"/>
    <property type="match status" value="1"/>
</dbReference>
<dbReference type="PANTHER" id="PTHR43144">
    <property type="entry name" value="AMINOTRANSFERASE"/>
    <property type="match status" value="1"/>
</dbReference>
<dbReference type="Pfam" id="PF00155">
    <property type="entry name" value="Aminotran_1_2"/>
    <property type="match status" value="1"/>
</dbReference>
<dbReference type="SUPFAM" id="SSF53383">
    <property type="entry name" value="PLP-dependent transferases"/>
    <property type="match status" value="1"/>
</dbReference>
<dbReference type="PROSITE" id="PS00105">
    <property type="entry name" value="AA_TRANSFER_CLASS_1"/>
    <property type="match status" value="1"/>
</dbReference>
<gene>
    <name evidence="1" type="primary">dapL</name>
    <name type="ordered locus">Cphy_0631</name>
</gene>
<organism>
    <name type="scientific">Lachnoclostridium phytofermentans (strain ATCC 700394 / DSM 18823 / ISDg)</name>
    <name type="common">Clostridium phytofermentans</name>
    <dbReference type="NCBI Taxonomy" id="357809"/>
    <lineage>
        <taxon>Bacteria</taxon>
        <taxon>Bacillati</taxon>
        <taxon>Bacillota</taxon>
        <taxon>Clostridia</taxon>
        <taxon>Lachnospirales</taxon>
        <taxon>Lachnospiraceae</taxon>
    </lineage>
</organism>
<accession>A9KJ19</accession>
<name>DAPAT_LACP7</name>
<reference key="1">
    <citation type="submission" date="2007-11" db="EMBL/GenBank/DDBJ databases">
        <title>Complete genome sequence of Clostridium phytofermentans ISDg.</title>
        <authorList>
            <person name="Leschine S.B."/>
            <person name="Warnick T.A."/>
            <person name="Blanchard J.L."/>
            <person name="Schnell D.J."/>
            <person name="Petit E.L."/>
            <person name="LaTouf W.G."/>
            <person name="Copeland A."/>
            <person name="Lucas S."/>
            <person name="Lapidus A."/>
            <person name="Barry K."/>
            <person name="Glavina del Rio T."/>
            <person name="Dalin E."/>
            <person name="Tice H."/>
            <person name="Pitluck S."/>
            <person name="Kiss H."/>
            <person name="Brettin T."/>
            <person name="Bruce D."/>
            <person name="Detter J.C."/>
            <person name="Han C."/>
            <person name="Kuske C."/>
            <person name="Schmutz J."/>
            <person name="Larimer F."/>
            <person name="Land M."/>
            <person name="Hauser L."/>
            <person name="Kyrpides N."/>
            <person name="Kim E.A."/>
            <person name="Richardson P."/>
        </authorList>
    </citation>
    <scope>NUCLEOTIDE SEQUENCE [LARGE SCALE GENOMIC DNA]</scope>
    <source>
        <strain>ATCC 700394 / DSM 18823 / ISDg</strain>
    </source>
</reference>
<protein>
    <recommendedName>
        <fullName evidence="1">LL-diaminopimelate aminotransferase</fullName>
        <shortName evidence="1">DAP-AT</shortName>
        <shortName evidence="1">DAP-aminotransferase</shortName>
        <shortName evidence="1">LL-DAP-aminotransferase</shortName>
        <ecNumber evidence="1">2.6.1.83</ecNumber>
    </recommendedName>
</protein>
<feature type="chain" id="PRO_0000342226" description="LL-diaminopimelate aminotransferase">
    <location>
        <begin position="1"/>
        <end position="404"/>
    </location>
</feature>
<feature type="binding site" evidence="1">
    <location>
        <position position="15"/>
    </location>
    <ligand>
        <name>substrate</name>
    </ligand>
</feature>
<feature type="binding site" evidence="1">
    <location>
        <position position="42"/>
    </location>
    <ligand>
        <name>substrate</name>
    </ligand>
</feature>
<feature type="binding site" evidence="1">
    <location>
        <position position="72"/>
    </location>
    <ligand>
        <name>pyridoxal 5'-phosphate</name>
        <dbReference type="ChEBI" id="CHEBI:597326"/>
    </ligand>
</feature>
<feature type="binding site" evidence="1">
    <location>
        <begin position="108"/>
        <end position="109"/>
    </location>
    <ligand>
        <name>pyridoxal 5'-phosphate</name>
        <dbReference type="ChEBI" id="CHEBI:597326"/>
    </ligand>
</feature>
<feature type="binding site" evidence="1">
    <location>
        <position position="109"/>
    </location>
    <ligand>
        <name>substrate</name>
    </ligand>
</feature>
<feature type="binding site" evidence="1">
    <location>
        <position position="132"/>
    </location>
    <ligand>
        <name>pyridoxal 5'-phosphate</name>
        <dbReference type="ChEBI" id="CHEBI:597326"/>
    </ligand>
</feature>
<feature type="binding site" evidence="1">
    <location>
        <position position="132"/>
    </location>
    <ligand>
        <name>substrate</name>
    </ligand>
</feature>
<feature type="binding site" evidence="1">
    <location>
        <position position="188"/>
    </location>
    <ligand>
        <name>pyridoxal 5'-phosphate</name>
        <dbReference type="ChEBI" id="CHEBI:597326"/>
    </ligand>
</feature>
<feature type="binding site" evidence="1">
    <location>
        <position position="188"/>
    </location>
    <ligand>
        <name>substrate</name>
    </ligand>
</feature>
<feature type="binding site" evidence="1">
    <location>
        <position position="219"/>
    </location>
    <ligand>
        <name>pyridoxal 5'-phosphate</name>
        <dbReference type="ChEBI" id="CHEBI:597326"/>
    </ligand>
</feature>
<feature type="binding site" evidence="1">
    <location>
        <begin position="247"/>
        <end position="249"/>
    </location>
    <ligand>
        <name>pyridoxal 5'-phosphate</name>
        <dbReference type="ChEBI" id="CHEBI:597326"/>
    </ligand>
</feature>
<feature type="binding site" evidence="1">
    <location>
        <position position="258"/>
    </location>
    <ligand>
        <name>pyridoxal 5'-phosphate</name>
        <dbReference type="ChEBI" id="CHEBI:597326"/>
    </ligand>
</feature>
<feature type="binding site" evidence="1">
    <location>
        <position position="288"/>
    </location>
    <ligand>
        <name>pyridoxal 5'-phosphate</name>
        <dbReference type="ChEBI" id="CHEBI:597326"/>
    </ligand>
</feature>
<feature type="binding site" evidence="1">
    <location>
        <position position="288"/>
    </location>
    <ligand>
        <name>substrate</name>
    </ligand>
</feature>
<feature type="binding site" evidence="1">
    <location>
        <position position="384"/>
    </location>
    <ligand>
        <name>substrate</name>
    </ligand>
</feature>
<feature type="modified residue" description="N6-(pyridoxal phosphate)lysine" evidence="1">
    <location>
        <position position="250"/>
    </location>
</feature>
<keyword id="KW-0032">Aminotransferase</keyword>
<keyword id="KW-0663">Pyridoxal phosphate</keyword>
<keyword id="KW-1185">Reference proteome</keyword>
<keyword id="KW-0808">Transferase</keyword>
<proteinExistence type="inferred from homology"/>
<comment type="function">
    <text evidence="1">Involved in the synthesis of meso-diaminopimelate (m-DAP or DL-DAP), required for both lysine and peptidoglycan biosynthesis. Catalyzes the direct conversion of tetrahydrodipicolinate to LL-diaminopimelate.</text>
</comment>
<comment type="catalytic activity">
    <reaction evidence="1">
        <text>(2S,6S)-2,6-diaminopimelate + 2-oxoglutarate = (S)-2,3,4,5-tetrahydrodipicolinate + L-glutamate + H2O + H(+)</text>
        <dbReference type="Rhea" id="RHEA:23988"/>
        <dbReference type="ChEBI" id="CHEBI:15377"/>
        <dbReference type="ChEBI" id="CHEBI:15378"/>
        <dbReference type="ChEBI" id="CHEBI:16810"/>
        <dbReference type="ChEBI" id="CHEBI:16845"/>
        <dbReference type="ChEBI" id="CHEBI:29985"/>
        <dbReference type="ChEBI" id="CHEBI:57609"/>
        <dbReference type="EC" id="2.6.1.83"/>
    </reaction>
</comment>
<comment type="cofactor">
    <cofactor evidence="1">
        <name>pyridoxal 5'-phosphate</name>
        <dbReference type="ChEBI" id="CHEBI:597326"/>
    </cofactor>
</comment>
<comment type="pathway">
    <text evidence="1">Amino-acid biosynthesis; L-lysine biosynthesis via DAP pathway; LL-2,6-diaminopimelate from (S)-tetrahydrodipicolinate (aminotransferase route): step 1/1.</text>
</comment>
<comment type="subunit">
    <text evidence="1">Homodimer.</text>
</comment>
<comment type="similarity">
    <text evidence="1">Belongs to the class-I pyridoxal-phosphate-dependent aminotransferase family. LL-diaminopimelate aminotransferase subfamily.</text>
</comment>
<evidence type="ECO:0000255" key="1">
    <source>
        <dbReference type="HAMAP-Rule" id="MF_01642"/>
    </source>
</evidence>